<protein>
    <recommendedName>
        <fullName evidence="1">Large ribosomal subunit protein uL5</fullName>
    </recommendedName>
    <alternativeName>
        <fullName evidence="2">50S ribosomal protein L5</fullName>
    </alternativeName>
</protein>
<accession>A5ELL5</accession>
<sequence length="185" mass="20787">MAETAYTPRLRTEYDRKIKSALTEKFGYANVMQVPRLDKVVLNMGIGEAVNDRKKAETAAADLSLIAGQKAVVTYSRVAIATFKLRENQPIGCKVTLRKAKMYEFIDRLINVALPRVRDFRGLNPKSFDGRGNYSLGIKEHIIFPEIDFDKAGESWGMDITVCTTAATDDEARALLTAFNFPFRQ</sequence>
<keyword id="KW-1185">Reference proteome</keyword>
<keyword id="KW-0687">Ribonucleoprotein</keyword>
<keyword id="KW-0689">Ribosomal protein</keyword>
<keyword id="KW-0694">RNA-binding</keyword>
<keyword id="KW-0699">rRNA-binding</keyword>
<keyword id="KW-0820">tRNA-binding</keyword>
<proteinExistence type="inferred from homology"/>
<feature type="chain" id="PRO_1000052697" description="Large ribosomal subunit protein uL5">
    <location>
        <begin position="1"/>
        <end position="185"/>
    </location>
</feature>
<organism>
    <name type="scientific">Bradyrhizobium sp. (strain BTAi1 / ATCC BAA-1182)</name>
    <dbReference type="NCBI Taxonomy" id="288000"/>
    <lineage>
        <taxon>Bacteria</taxon>
        <taxon>Pseudomonadati</taxon>
        <taxon>Pseudomonadota</taxon>
        <taxon>Alphaproteobacteria</taxon>
        <taxon>Hyphomicrobiales</taxon>
        <taxon>Nitrobacteraceae</taxon>
        <taxon>Bradyrhizobium</taxon>
    </lineage>
</organism>
<dbReference type="EMBL" id="CP000494">
    <property type="protein sequence ID" value="ABQ37059.1"/>
    <property type="molecule type" value="Genomic_DNA"/>
</dbReference>
<dbReference type="RefSeq" id="WP_012045039.1">
    <property type="nucleotide sequence ID" value="NC_009485.1"/>
</dbReference>
<dbReference type="SMR" id="A5ELL5"/>
<dbReference type="STRING" id="288000.BBta_5058"/>
<dbReference type="KEGG" id="bbt:BBta_5058"/>
<dbReference type="eggNOG" id="COG0094">
    <property type="taxonomic scope" value="Bacteria"/>
</dbReference>
<dbReference type="HOGENOM" id="CLU_061015_2_1_5"/>
<dbReference type="OrthoDB" id="9806626at2"/>
<dbReference type="Proteomes" id="UP000000246">
    <property type="component" value="Chromosome"/>
</dbReference>
<dbReference type="GO" id="GO:1990904">
    <property type="term" value="C:ribonucleoprotein complex"/>
    <property type="evidence" value="ECO:0007669"/>
    <property type="project" value="UniProtKB-KW"/>
</dbReference>
<dbReference type="GO" id="GO:0005840">
    <property type="term" value="C:ribosome"/>
    <property type="evidence" value="ECO:0007669"/>
    <property type="project" value="UniProtKB-KW"/>
</dbReference>
<dbReference type="GO" id="GO:0019843">
    <property type="term" value="F:rRNA binding"/>
    <property type="evidence" value="ECO:0007669"/>
    <property type="project" value="UniProtKB-UniRule"/>
</dbReference>
<dbReference type="GO" id="GO:0003735">
    <property type="term" value="F:structural constituent of ribosome"/>
    <property type="evidence" value="ECO:0007669"/>
    <property type="project" value="InterPro"/>
</dbReference>
<dbReference type="GO" id="GO:0000049">
    <property type="term" value="F:tRNA binding"/>
    <property type="evidence" value="ECO:0007669"/>
    <property type="project" value="UniProtKB-UniRule"/>
</dbReference>
<dbReference type="GO" id="GO:0006412">
    <property type="term" value="P:translation"/>
    <property type="evidence" value="ECO:0007669"/>
    <property type="project" value="UniProtKB-UniRule"/>
</dbReference>
<dbReference type="FunFam" id="3.30.1440.10:FF:000001">
    <property type="entry name" value="50S ribosomal protein L5"/>
    <property type="match status" value="1"/>
</dbReference>
<dbReference type="Gene3D" id="3.30.1440.10">
    <property type="match status" value="1"/>
</dbReference>
<dbReference type="HAMAP" id="MF_01333_B">
    <property type="entry name" value="Ribosomal_uL5_B"/>
    <property type="match status" value="1"/>
</dbReference>
<dbReference type="InterPro" id="IPR002132">
    <property type="entry name" value="Ribosomal_uL5"/>
</dbReference>
<dbReference type="InterPro" id="IPR020930">
    <property type="entry name" value="Ribosomal_uL5_bac-type"/>
</dbReference>
<dbReference type="InterPro" id="IPR031309">
    <property type="entry name" value="Ribosomal_uL5_C"/>
</dbReference>
<dbReference type="InterPro" id="IPR020929">
    <property type="entry name" value="Ribosomal_uL5_CS"/>
</dbReference>
<dbReference type="InterPro" id="IPR022803">
    <property type="entry name" value="Ribosomal_uL5_dom_sf"/>
</dbReference>
<dbReference type="InterPro" id="IPR031310">
    <property type="entry name" value="Ribosomal_uL5_N"/>
</dbReference>
<dbReference type="NCBIfam" id="NF000585">
    <property type="entry name" value="PRK00010.1"/>
    <property type="match status" value="1"/>
</dbReference>
<dbReference type="PANTHER" id="PTHR11994">
    <property type="entry name" value="60S RIBOSOMAL PROTEIN L11-RELATED"/>
    <property type="match status" value="1"/>
</dbReference>
<dbReference type="Pfam" id="PF00281">
    <property type="entry name" value="Ribosomal_L5"/>
    <property type="match status" value="1"/>
</dbReference>
<dbReference type="Pfam" id="PF00673">
    <property type="entry name" value="Ribosomal_L5_C"/>
    <property type="match status" value="1"/>
</dbReference>
<dbReference type="PIRSF" id="PIRSF002161">
    <property type="entry name" value="Ribosomal_L5"/>
    <property type="match status" value="1"/>
</dbReference>
<dbReference type="SUPFAM" id="SSF55282">
    <property type="entry name" value="RL5-like"/>
    <property type="match status" value="1"/>
</dbReference>
<dbReference type="PROSITE" id="PS00358">
    <property type="entry name" value="RIBOSOMAL_L5"/>
    <property type="match status" value="1"/>
</dbReference>
<comment type="function">
    <text evidence="1">This is one of the proteins that bind and probably mediate the attachment of the 5S RNA into the large ribosomal subunit, where it forms part of the central protuberance. In the 70S ribosome it contacts protein S13 of the 30S subunit (bridge B1b), connecting the 2 subunits; this bridge is implicated in subunit movement. Contacts the P site tRNA; the 5S rRNA and some of its associated proteins might help stabilize positioning of ribosome-bound tRNAs.</text>
</comment>
<comment type="subunit">
    <text evidence="1">Part of the 50S ribosomal subunit; part of the 5S rRNA/L5/L18/L25 subcomplex. Contacts the 5S rRNA and the P site tRNA. Forms a bridge to the 30S subunit in the 70S ribosome.</text>
</comment>
<comment type="similarity">
    <text evidence="1">Belongs to the universal ribosomal protein uL5 family.</text>
</comment>
<evidence type="ECO:0000255" key="1">
    <source>
        <dbReference type="HAMAP-Rule" id="MF_01333"/>
    </source>
</evidence>
<evidence type="ECO:0000305" key="2"/>
<name>RL5_BRASB</name>
<gene>
    <name evidence="1" type="primary">rplE</name>
    <name type="ordered locus">BBta_5058</name>
</gene>
<reference key="1">
    <citation type="journal article" date="2007" name="Science">
        <title>Legumes symbioses: absence of nod genes in photosynthetic bradyrhizobia.</title>
        <authorList>
            <person name="Giraud E."/>
            <person name="Moulin L."/>
            <person name="Vallenet D."/>
            <person name="Barbe V."/>
            <person name="Cytryn E."/>
            <person name="Avarre J.-C."/>
            <person name="Jaubert M."/>
            <person name="Simon D."/>
            <person name="Cartieaux F."/>
            <person name="Prin Y."/>
            <person name="Bena G."/>
            <person name="Hannibal L."/>
            <person name="Fardoux J."/>
            <person name="Kojadinovic M."/>
            <person name="Vuillet L."/>
            <person name="Lajus A."/>
            <person name="Cruveiller S."/>
            <person name="Rouy Z."/>
            <person name="Mangenot S."/>
            <person name="Segurens B."/>
            <person name="Dossat C."/>
            <person name="Franck W.L."/>
            <person name="Chang W.-S."/>
            <person name="Saunders E."/>
            <person name="Bruce D."/>
            <person name="Richardson P."/>
            <person name="Normand P."/>
            <person name="Dreyfus B."/>
            <person name="Pignol D."/>
            <person name="Stacey G."/>
            <person name="Emerich D."/>
            <person name="Vermeglio A."/>
            <person name="Medigue C."/>
            <person name="Sadowsky M."/>
        </authorList>
    </citation>
    <scope>NUCLEOTIDE SEQUENCE [LARGE SCALE GENOMIC DNA]</scope>
    <source>
        <strain>BTAi1 / ATCC BAA-1182</strain>
    </source>
</reference>